<organism>
    <name type="scientific">Rotavirus A (strain RVA/Human/United States/P/1974/G3P1A[8])</name>
    <name type="common">RV-A</name>
    <dbReference type="NCBI Taxonomy" id="10957"/>
    <lineage>
        <taxon>Viruses</taxon>
        <taxon>Riboviria</taxon>
        <taxon>Orthornavirae</taxon>
        <taxon>Duplornaviricota</taxon>
        <taxon>Resentoviricetes</taxon>
        <taxon>Reovirales</taxon>
        <taxon>Sedoreoviridae</taxon>
        <taxon>Rotavirus</taxon>
        <taxon>Rotavirus A</taxon>
    </lineage>
</organism>
<organismHost>
    <name type="scientific">Homo sapiens</name>
    <name type="common">Human</name>
    <dbReference type="NCBI Taxonomy" id="9606"/>
</organismHost>
<dbReference type="EMBL" id="EF672604">
    <property type="protein sequence ID" value="ABV53283.1"/>
    <property type="molecule type" value="Genomic_RNA"/>
</dbReference>
<dbReference type="Proteomes" id="UP000007047">
    <property type="component" value="Genome"/>
</dbReference>
<dbReference type="GO" id="GO:0033650">
    <property type="term" value="C:host cell mitochondrion"/>
    <property type="evidence" value="ECO:0007669"/>
    <property type="project" value="UniProtKB-SubCell"/>
</dbReference>
<dbReference type="HAMAP" id="MF_04093">
    <property type="entry name" value="ROTA_NSP6"/>
    <property type="match status" value="1"/>
</dbReference>
<dbReference type="InterPro" id="IPR006950">
    <property type="entry name" value="Rotavirus_NSP6"/>
</dbReference>
<dbReference type="Pfam" id="PF04866">
    <property type="entry name" value="Rota_NS6"/>
    <property type="match status" value="1"/>
</dbReference>
<proteinExistence type="inferred from homology"/>
<sequence>MNRLLQRQLFLENLLVGVNSTFHQMQKHSINTCCRSL</sequence>
<protein>
    <recommendedName>
        <fullName evidence="1">Non-structural protein 6</fullName>
        <shortName evidence="1">NSP6</shortName>
    </recommendedName>
</protein>
<reference key="1">
    <citation type="journal article" date="2008" name="J. Virol.">
        <title>Group A human rotavirus genomics: evidence that gene constellations are influenced by viral protein interactions.</title>
        <authorList>
            <person name="Heiman E.M."/>
            <person name="McDonald S.M."/>
            <person name="Barro M."/>
            <person name="Taraporewala Z.F."/>
            <person name="Bar-Magen T."/>
            <person name="Patton J.T."/>
        </authorList>
    </citation>
    <scope>NUCLEOTIDE SEQUENCE [GENOMIC RNA]</scope>
</reference>
<accession>B3SRV8</accession>
<feature type="chain" id="PRO_0000369524" description="Non-structural protein 6">
    <location>
        <begin position="1"/>
        <end position="37"/>
    </location>
</feature>
<name>NSP6_ROTHP</name>
<comment type="subunit">
    <text evidence="1">Interacts with NSP2 and NSP5.</text>
</comment>
<comment type="subcellular location">
    <subcellularLocation>
        <location evidence="1">Host cytoplasm</location>
    </subcellularLocation>
    <subcellularLocation>
        <location evidence="1">Host mitochondrion</location>
    </subcellularLocation>
    <text evidence="1">Found in spherical cytoplasmic structures, called viral factories, that appear early after infection and are the site of viral replication and packaging.</text>
</comment>
<comment type="similarity">
    <text evidence="1">Belongs to the rotavirus A NSP6 family.</text>
</comment>
<comment type="caution">
    <text>This protein is truncated.</text>
</comment>
<evidence type="ECO:0000255" key="1">
    <source>
        <dbReference type="HAMAP-Rule" id="MF_04093"/>
    </source>
</evidence>
<keyword id="KW-1035">Host cytoplasm</keyword>
<keyword id="KW-1045">Host mitochondrion</keyword>